<organism>
    <name type="scientific">Ralstonia nicotianae (strain ATCC BAA-1114 / GMI1000)</name>
    <name type="common">Ralstonia solanacearum</name>
    <dbReference type="NCBI Taxonomy" id="267608"/>
    <lineage>
        <taxon>Bacteria</taxon>
        <taxon>Pseudomonadati</taxon>
        <taxon>Pseudomonadota</taxon>
        <taxon>Betaproteobacteria</taxon>
        <taxon>Burkholderiales</taxon>
        <taxon>Burkholderiaceae</taxon>
        <taxon>Ralstonia</taxon>
        <taxon>Ralstonia solanacearum species complex</taxon>
    </lineage>
</organism>
<geneLocation type="plasmid">
    <name>megaplasmid Rsp</name>
</geneLocation>
<sequence>MEYLRIAFLFALTALAEIVGCYLPWLVLRQAKSAWLLMPAALSLALFAWLLTLHPTAAGRTYAAYGGMYIAVALAWLRVVDGATLTRWDIGGAAIALAGMAVIALQPQPT</sequence>
<reference key="1">
    <citation type="journal article" date="2002" name="Nature">
        <title>Genome sequence of the plant pathogen Ralstonia solanacearum.</title>
        <authorList>
            <person name="Salanoubat M."/>
            <person name="Genin S."/>
            <person name="Artiguenave F."/>
            <person name="Gouzy J."/>
            <person name="Mangenot S."/>
            <person name="Arlat M."/>
            <person name="Billault A."/>
            <person name="Brottier P."/>
            <person name="Camus J.-C."/>
            <person name="Cattolico L."/>
            <person name="Chandler M."/>
            <person name="Choisne N."/>
            <person name="Claudel-Renard C."/>
            <person name="Cunnac S."/>
            <person name="Demange N."/>
            <person name="Gaspin C."/>
            <person name="Lavie M."/>
            <person name="Moisan A."/>
            <person name="Robert C."/>
            <person name="Saurin W."/>
            <person name="Schiex T."/>
            <person name="Siguier P."/>
            <person name="Thebault P."/>
            <person name="Whalen M."/>
            <person name="Wincker P."/>
            <person name="Levy M."/>
            <person name="Weissenbach J."/>
            <person name="Boucher C.A."/>
        </authorList>
    </citation>
    <scope>NUCLEOTIDE SEQUENCE [LARGE SCALE GENOMIC DNA]</scope>
    <source>
        <strain>ATCC BAA-1114 / GMI1000</strain>
    </source>
</reference>
<dbReference type="EMBL" id="AL646053">
    <property type="protein sequence ID" value="CAD18426.1"/>
    <property type="molecule type" value="Genomic_DNA"/>
</dbReference>
<dbReference type="RefSeq" id="WP_011004557.1">
    <property type="nucleotide sequence ID" value="NC_003296.1"/>
</dbReference>
<dbReference type="SMR" id="Q8XQF2"/>
<dbReference type="STRING" id="267608.RSp1275"/>
<dbReference type="EnsemblBacteria" id="CAD18426">
    <property type="protein sequence ID" value="CAD18426"/>
    <property type="gene ID" value="RSp1275"/>
</dbReference>
<dbReference type="KEGG" id="rso:RSp1275"/>
<dbReference type="eggNOG" id="COG1742">
    <property type="taxonomic scope" value="Bacteria"/>
</dbReference>
<dbReference type="HOGENOM" id="CLU_117653_2_0_4"/>
<dbReference type="Proteomes" id="UP000001436">
    <property type="component" value="Plasmid megaplasmid Rsp"/>
</dbReference>
<dbReference type="GO" id="GO:0005886">
    <property type="term" value="C:plasma membrane"/>
    <property type="evidence" value="ECO:0007669"/>
    <property type="project" value="UniProtKB-SubCell"/>
</dbReference>
<dbReference type="HAMAP" id="MF_00010">
    <property type="entry name" value="UPF0060"/>
    <property type="match status" value="1"/>
</dbReference>
<dbReference type="InterPro" id="IPR003844">
    <property type="entry name" value="UPF0060"/>
</dbReference>
<dbReference type="NCBIfam" id="NF002586">
    <property type="entry name" value="PRK02237.1"/>
    <property type="match status" value="1"/>
</dbReference>
<dbReference type="PANTHER" id="PTHR36116">
    <property type="entry name" value="UPF0060 MEMBRANE PROTEIN YNFA"/>
    <property type="match status" value="1"/>
</dbReference>
<dbReference type="PANTHER" id="PTHR36116:SF1">
    <property type="entry name" value="UPF0060 MEMBRANE PROTEIN YNFA"/>
    <property type="match status" value="1"/>
</dbReference>
<dbReference type="Pfam" id="PF02694">
    <property type="entry name" value="UPF0060"/>
    <property type="match status" value="1"/>
</dbReference>
<dbReference type="SUPFAM" id="SSF103481">
    <property type="entry name" value="Multidrug resistance efflux transporter EmrE"/>
    <property type="match status" value="1"/>
</dbReference>
<keyword id="KW-0997">Cell inner membrane</keyword>
<keyword id="KW-1003">Cell membrane</keyword>
<keyword id="KW-0472">Membrane</keyword>
<keyword id="KW-0614">Plasmid</keyword>
<keyword id="KW-1185">Reference proteome</keyword>
<keyword id="KW-0812">Transmembrane</keyword>
<keyword id="KW-1133">Transmembrane helix</keyword>
<comment type="subcellular location">
    <subcellularLocation>
        <location evidence="1">Cell inner membrane</location>
        <topology evidence="1">Multi-pass membrane protein</topology>
    </subcellularLocation>
</comment>
<comment type="similarity">
    <text evidence="1">Belongs to the UPF0060 family.</text>
</comment>
<gene>
    <name type="ordered locus">RSp1275</name>
    <name type="ORF">RS05320</name>
</gene>
<proteinExistence type="inferred from homology"/>
<name>Y4775_RALN1</name>
<feature type="chain" id="PRO_0000162339" description="UPF0060 membrane protein RSp1275">
    <location>
        <begin position="1"/>
        <end position="110"/>
    </location>
</feature>
<feature type="transmembrane region" description="Helical" evidence="1">
    <location>
        <begin position="8"/>
        <end position="28"/>
    </location>
</feature>
<feature type="transmembrane region" description="Helical" evidence="1">
    <location>
        <begin position="33"/>
        <end position="53"/>
    </location>
</feature>
<feature type="transmembrane region" description="Helical" evidence="1">
    <location>
        <begin position="63"/>
        <end position="83"/>
    </location>
</feature>
<feature type="transmembrane region" description="Helical" evidence="1">
    <location>
        <begin position="90"/>
        <end position="110"/>
    </location>
</feature>
<evidence type="ECO:0000255" key="1">
    <source>
        <dbReference type="HAMAP-Rule" id="MF_00010"/>
    </source>
</evidence>
<protein>
    <recommendedName>
        <fullName evidence="1">UPF0060 membrane protein RSp1275</fullName>
    </recommendedName>
</protein>
<accession>Q8XQF2</accession>